<name>APT_THENN</name>
<dbReference type="EC" id="2.4.2.7" evidence="1"/>
<dbReference type="EMBL" id="CP000916">
    <property type="protein sequence ID" value="ACM23383.1"/>
    <property type="molecule type" value="Genomic_DNA"/>
</dbReference>
<dbReference type="RefSeq" id="WP_015919698.1">
    <property type="nucleotide sequence ID" value="NC_011978.1"/>
</dbReference>
<dbReference type="SMR" id="B9K8V0"/>
<dbReference type="STRING" id="309803.CTN_1207"/>
<dbReference type="KEGG" id="tna:CTN_1207"/>
<dbReference type="eggNOG" id="COG0503">
    <property type="taxonomic scope" value="Bacteria"/>
</dbReference>
<dbReference type="HOGENOM" id="CLU_063339_3_0_0"/>
<dbReference type="UniPathway" id="UPA00588">
    <property type="reaction ID" value="UER00646"/>
</dbReference>
<dbReference type="Proteomes" id="UP000000445">
    <property type="component" value="Chromosome"/>
</dbReference>
<dbReference type="GO" id="GO:0005737">
    <property type="term" value="C:cytoplasm"/>
    <property type="evidence" value="ECO:0007669"/>
    <property type="project" value="UniProtKB-SubCell"/>
</dbReference>
<dbReference type="GO" id="GO:0002055">
    <property type="term" value="F:adenine binding"/>
    <property type="evidence" value="ECO:0007669"/>
    <property type="project" value="TreeGrafter"/>
</dbReference>
<dbReference type="GO" id="GO:0003999">
    <property type="term" value="F:adenine phosphoribosyltransferase activity"/>
    <property type="evidence" value="ECO:0007669"/>
    <property type="project" value="UniProtKB-UniRule"/>
</dbReference>
<dbReference type="GO" id="GO:0016208">
    <property type="term" value="F:AMP binding"/>
    <property type="evidence" value="ECO:0007669"/>
    <property type="project" value="TreeGrafter"/>
</dbReference>
<dbReference type="GO" id="GO:0006168">
    <property type="term" value="P:adenine salvage"/>
    <property type="evidence" value="ECO:0007669"/>
    <property type="project" value="InterPro"/>
</dbReference>
<dbReference type="GO" id="GO:0044209">
    <property type="term" value="P:AMP salvage"/>
    <property type="evidence" value="ECO:0007669"/>
    <property type="project" value="UniProtKB-UniRule"/>
</dbReference>
<dbReference type="GO" id="GO:0006166">
    <property type="term" value="P:purine ribonucleoside salvage"/>
    <property type="evidence" value="ECO:0007669"/>
    <property type="project" value="UniProtKB-KW"/>
</dbReference>
<dbReference type="CDD" id="cd06223">
    <property type="entry name" value="PRTases_typeI"/>
    <property type="match status" value="1"/>
</dbReference>
<dbReference type="FunFam" id="3.40.50.2020:FF:000021">
    <property type="entry name" value="Adenine phosphoribosyltransferase"/>
    <property type="match status" value="1"/>
</dbReference>
<dbReference type="Gene3D" id="3.40.50.2020">
    <property type="match status" value="1"/>
</dbReference>
<dbReference type="HAMAP" id="MF_00004">
    <property type="entry name" value="Aden_phosphoribosyltr"/>
    <property type="match status" value="1"/>
</dbReference>
<dbReference type="InterPro" id="IPR005764">
    <property type="entry name" value="Ade_phspho_trans"/>
</dbReference>
<dbReference type="InterPro" id="IPR000836">
    <property type="entry name" value="PRibTrfase_dom"/>
</dbReference>
<dbReference type="InterPro" id="IPR029057">
    <property type="entry name" value="PRTase-like"/>
</dbReference>
<dbReference type="InterPro" id="IPR050054">
    <property type="entry name" value="UPRTase/APRTase"/>
</dbReference>
<dbReference type="NCBIfam" id="TIGR01090">
    <property type="entry name" value="apt"/>
    <property type="match status" value="1"/>
</dbReference>
<dbReference type="NCBIfam" id="NF002633">
    <property type="entry name" value="PRK02304.1-2"/>
    <property type="match status" value="1"/>
</dbReference>
<dbReference type="NCBIfam" id="NF002634">
    <property type="entry name" value="PRK02304.1-3"/>
    <property type="match status" value="1"/>
</dbReference>
<dbReference type="NCBIfam" id="NF002636">
    <property type="entry name" value="PRK02304.1-5"/>
    <property type="match status" value="1"/>
</dbReference>
<dbReference type="PANTHER" id="PTHR32315">
    <property type="entry name" value="ADENINE PHOSPHORIBOSYLTRANSFERASE"/>
    <property type="match status" value="1"/>
</dbReference>
<dbReference type="PANTHER" id="PTHR32315:SF3">
    <property type="entry name" value="ADENINE PHOSPHORIBOSYLTRANSFERASE"/>
    <property type="match status" value="1"/>
</dbReference>
<dbReference type="Pfam" id="PF00156">
    <property type="entry name" value="Pribosyltran"/>
    <property type="match status" value="1"/>
</dbReference>
<dbReference type="SUPFAM" id="SSF53271">
    <property type="entry name" value="PRTase-like"/>
    <property type="match status" value="1"/>
</dbReference>
<dbReference type="PROSITE" id="PS00103">
    <property type="entry name" value="PUR_PYR_PR_TRANSFER"/>
    <property type="match status" value="1"/>
</dbReference>
<comment type="function">
    <text evidence="1">Catalyzes a salvage reaction resulting in the formation of AMP, that is energically less costly than de novo synthesis.</text>
</comment>
<comment type="catalytic activity">
    <reaction evidence="1">
        <text>AMP + diphosphate = 5-phospho-alpha-D-ribose 1-diphosphate + adenine</text>
        <dbReference type="Rhea" id="RHEA:16609"/>
        <dbReference type="ChEBI" id="CHEBI:16708"/>
        <dbReference type="ChEBI" id="CHEBI:33019"/>
        <dbReference type="ChEBI" id="CHEBI:58017"/>
        <dbReference type="ChEBI" id="CHEBI:456215"/>
        <dbReference type="EC" id="2.4.2.7"/>
    </reaction>
</comment>
<comment type="pathway">
    <text evidence="1">Purine metabolism; AMP biosynthesis via salvage pathway; AMP from adenine: step 1/1.</text>
</comment>
<comment type="subunit">
    <text evidence="1">Homodimer.</text>
</comment>
<comment type="subcellular location">
    <subcellularLocation>
        <location evidence="1">Cytoplasm</location>
    </subcellularLocation>
</comment>
<comment type="similarity">
    <text evidence="1">Belongs to the purine/pyrimidine phosphoribosyltransferase family.</text>
</comment>
<proteinExistence type="inferred from homology"/>
<keyword id="KW-0963">Cytoplasm</keyword>
<keyword id="KW-0328">Glycosyltransferase</keyword>
<keyword id="KW-0660">Purine salvage</keyword>
<keyword id="KW-0808">Transferase</keyword>
<sequence length="170" mass="19289">MDLKQFIRDIPDFPQKGIIFRDITPLLKDSRAFREAIDRMCDLVSDRDFDLVVAPEARGFILGAAMAYKLGKGFVPVRKPGKLPYRTVYEEYQLEYGTEQLHIHEDAIERGQKVLIVDDVLATGGTAEALIRLVKKLGGEVSALAFLVELSYLNPRKRLEGYDIKTLIVY</sequence>
<reference key="1">
    <citation type="submission" date="2007-11" db="EMBL/GenBank/DDBJ databases">
        <title>The genome sequence of the hyperthermophilic bacterium Thermotoga neapolitana.</title>
        <authorList>
            <person name="Lim S.K."/>
            <person name="Kim J.S."/>
            <person name="Cha S.H."/>
            <person name="Park B.C."/>
            <person name="Lee D.S."/>
            <person name="Tae H.S."/>
            <person name="Kim S.-J."/>
            <person name="Kim J.J."/>
            <person name="Park K.J."/>
            <person name="Lee S.Y."/>
        </authorList>
    </citation>
    <scope>NUCLEOTIDE SEQUENCE [LARGE SCALE GENOMIC DNA]</scope>
    <source>
        <strain>ATCC 49049 / DSM 4359 / NBRC 107923 / NS-E</strain>
    </source>
</reference>
<evidence type="ECO:0000255" key="1">
    <source>
        <dbReference type="HAMAP-Rule" id="MF_00004"/>
    </source>
</evidence>
<feature type="chain" id="PRO_1000116263" description="Adenine phosphoribosyltransferase">
    <location>
        <begin position="1"/>
        <end position="170"/>
    </location>
</feature>
<gene>
    <name evidence="1" type="primary">apt</name>
    <name type="ordered locus">CTN_1207</name>
</gene>
<protein>
    <recommendedName>
        <fullName evidence="1">Adenine phosphoribosyltransferase</fullName>
        <shortName evidence="1">APRT</shortName>
        <ecNumber evidence="1">2.4.2.7</ecNumber>
    </recommendedName>
</protein>
<organism>
    <name type="scientific">Thermotoga neapolitana (strain ATCC 49049 / DSM 4359 / NBRC 107923 / NS-E)</name>
    <dbReference type="NCBI Taxonomy" id="309803"/>
    <lineage>
        <taxon>Bacteria</taxon>
        <taxon>Thermotogati</taxon>
        <taxon>Thermotogota</taxon>
        <taxon>Thermotogae</taxon>
        <taxon>Thermotogales</taxon>
        <taxon>Thermotogaceae</taxon>
        <taxon>Thermotoga</taxon>
    </lineage>
</organism>
<accession>B9K8V0</accession>